<dbReference type="EMBL" id="X53710">
    <property type="protein sequence ID" value="CAA37747.1"/>
    <property type="status" value="ALT_SEQ"/>
    <property type="molecule type" value="Genomic_DNA"/>
</dbReference>
<dbReference type="EMBL" id="D83009">
    <property type="protein sequence ID" value="BAA11679.1"/>
    <property type="molecule type" value="mRNA"/>
</dbReference>
<dbReference type="EMBL" id="BA000029">
    <property type="status" value="NOT_ANNOTATED_CDS"/>
    <property type="molecule type" value="Genomic_DNA"/>
</dbReference>
<dbReference type="RefSeq" id="YP_002000585.1">
    <property type="nucleotide sequence ID" value="NC_011033.1"/>
</dbReference>
<dbReference type="SMR" id="P0C524"/>
<dbReference type="FunCoup" id="P0C524">
    <property type="interactions" value="44"/>
</dbReference>
<dbReference type="STRING" id="39947.P0C524"/>
<dbReference type="PaxDb" id="39947-P0C524"/>
<dbReference type="GeneID" id="6450178"/>
<dbReference type="KEGG" id="osa:6450178"/>
<dbReference type="InParanoid" id="P0C524"/>
<dbReference type="OrthoDB" id="724842at2759"/>
<dbReference type="Proteomes" id="UP000059680">
    <property type="component" value="Mitochondrion"/>
</dbReference>
<dbReference type="GO" id="GO:0016020">
    <property type="term" value="C:membrane"/>
    <property type="evidence" value="ECO:0000318"/>
    <property type="project" value="GO_Central"/>
</dbReference>
<dbReference type="GO" id="GO:0005743">
    <property type="term" value="C:mitochondrial inner membrane"/>
    <property type="evidence" value="ECO:0007669"/>
    <property type="project" value="UniProtKB-SubCell"/>
</dbReference>
<dbReference type="GO" id="GO:0005739">
    <property type="term" value="C:mitochondrion"/>
    <property type="evidence" value="ECO:0000305"/>
    <property type="project" value="Gramene"/>
</dbReference>
<dbReference type="GO" id="GO:0045275">
    <property type="term" value="C:respiratory chain complex III"/>
    <property type="evidence" value="ECO:0000318"/>
    <property type="project" value="GO_Central"/>
</dbReference>
<dbReference type="GO" id="GO:0046872">
    <property type="term" value="F:metal ion binding"/>
    <property type="evidence" value="ECO:0007669"/>
    <property type="project" value="UniProtKB-KW"/>
</dbReference>
<dbReference type="GO" id="GO:0008121">
    <property type="term" value="F:ubiquinol-cytochrome-c reductase activity"/>
    <property type="evidence" value="ECO:0007669"/>
    <property type="project" value="InterPro"/>
</dbReference>
<dbReference type="GO" id="GO:0006122">
    <property type="term" value="P:mitochondrial electron transport, ubiquinol to cytochrome c"/>
    <property type="evidence" value="ECO:0000318"/>
    <property type="project" value="GO_Central"/>
</dbReference>
<dbReference type="CDD" id="cd00290">
    <property type="entry name" value="cytochrome_b_C"/>
    <property type="match status" value="1"/>
</dbReference>
<dbReference type="CDD" id="cd00284">
    <property type="entry name" value="Cytochrome_b_N"/>
    <property type="match status" value="1"/>
</dbReference>
<dbReference type="FunFam" id="1.20.810.10:FF:000006">
    <property type="entry name" value="Cytochrome b"/>
    <property type="match status" value="1"/>
</dbReference>
<dbReference type="Gene3D" id="1.20.810.10">
    <property type="entry name" value="Cytochrome Bc1 Complex, Chain C"/>
    <property type="match status" value="1"/>
</dbReference>
<dbReference type="InterPro" id="IPR005798">
    <property type="entry name" value="Cyt_b/b6_C"/>
</dbReference>
<dbReference type="InterPro" id="IPR036150">
    <property type="entry name" value="Cyt_b/b6_C_sf"/>
</dbReference>
<dbReference type="InterPro" id="IPR005797">
    <property type="entry name" value="Cyt_b/b6_N"/>
</dbReference>
<dbReference type="InterPro" id="IPR027387">
    <property type="entry name" value="Cytb/b6-like_sf"/>
</dbReference>
<dbReference type="InterPro" id="IPR030689">
    <property type="entry name" value="Cytochrome_b"/>
</dbReference>
<dbReference type="InterPro" id="IPR048260">
    <property type="entry name" value="Cytochrome_b_C_euk/bac"/>
</dbReference>
<dbReference type="InterPro" id="IPR048259">
    <property type="entry name" value="Cytochrome_b_N_euk/bac"/>
</dbReference>
<dbReference type="InterPro" id="IPR016174">
    <property type="entry name" value="Di-haem_cyt_TM"/>
</dbReference>
<dbReference type="PANTHER" id="PTHR19271">
    <property type="entry name" value="CYTOCHROME B"/>
    <property type="match status" value="1"/>
</dbReference>
<dbReference type="PANTHER" id="PTHR19271:SF16">
    <property type="entry name" value="CYTOCHROME B"/>
    <property type="match status" value="1"/>
</dbReference>
<dbReference type="Pfam" id="PF00032">
    <property type="entry name" value="Cytochrom_B_C"/>
    <property type="match status" value="1"/>
</dbReference>
<dbReference type="Pfam" id="PF00033">
    <property type="entry name" value="Cytochrome_B"/>
    <property type="match status" value="1"/>
</dbReference>
<dbReference type="PIRSF" id="PIRSF038885">
    <property type="entry name" value="COB"/>
    <property type="match status" value="1"/>
</dbReference>
<dbReference type="SUPFAM" id="SSF81648">
    <property type="entry name" value="a domain/subunit of cytochrome bc1 complex (Ubiquinol-cytochrome c reductase)"/>
    <property type="match status" value="1"/>
</dbReference>
<dbReference type="SUPFAM" id="SSF81342">
    <property type="entry name" value="Transmembrane di-heme cytochromes"/>
    <property type="match status" value="1"/>
</dbReference>
<dbReference type="PROSITE" id="PS51003">
    <property type="entry name" value="CYTB_CTER"/>
    <property type="match status" value="1"/>
</dbReference>
<dbReference type="PROSITE" id="PS51002">
    <property type="entry name" value="CYTB_NTER"/>
    <property type="match status" value="1"/>
</dbReference>
<name>CYB_ORYSJ</name>
<proteinExistence type="evidence at transcript level"/>
<accession>P0C524</accession>
<accession>P14833</accession>
<accession>P92682</accession>
<accession>Q35293</accession>
<keyword id="KW-0249">Electron transport</keyword>
<keyword id="KW-0349">Heme</keyword>
<keyword id="KW-0408">Iron</keyword>
<keyword id="KW-0472">Membrane</keyword>
<keyword id="KW-0479">Metal-binding</keyword>
<keyword id="KW-0496">Mitochondrion</keyword>
<keyword id="KW-0999">Mitochondrion inner membrane</keyword>
<keyword id="KW-1185">Reference proteome</keyword>
<keyword id="KW-0679">Respiratory chain</keyword>
<keyword id="KW-0691">RNA editing</keyword>
<keyword id="KW-0812">Transmembrane</keyword>
<keyword id="KW-1133">Transmembrane helix</keyword>
<keyword id="KW-0813">Transport</keyword>
<keyword id="KW-0830">Ubiquinone</keyword>
<reference key="1">
    <citation type="journal article" date="1996" name="Genes Genet. Syst.">
        <title>RNA editing of transcripts of the gene for apocytochrome b (cob) in rice mitochondria.</title>
        <authorList>
            <person name="Ito Y."/>
            <person name="Nakazono M."/>
            <person name="Kadowaki K."/>
            <person name="Tsutsumi N."/>
            <person name="Hirai A."/>
        </authorList>
    </citation>
    <scope>NUCLEOTIDE SEQUENCE [GENOMIC DNA / MRNA]</scope>
    <scope>RNA EDITING</scope>
    <source>
        <strain>cv. Nipponbare</strain>
        <strain>cv. Taichung 65</strain>
        <tissue>Shoot</tissue>
    </source>
</reference>
<reference key="2">
    <citation type="journal article" date="2002" name="Mol. Genet. Genomics">
        <title>The complete sequence of the rice (Oryza sativa L.) mitochondrial genome: frequent DNA sequence acquisition and loss during the evolution of flowering plants.</title>
        <authorList>
            <person name="Notsu Y."/>
            <person name="Masood S."/>
            <person name="Nishikawa T."/>
            <person name="Kubo N."/>
            <person name="Akiduki G."/>
            <person name="Nakazono M."/>
            <person name="Hirai A."/>
            <person name="Kadowaki K."/>
        </authorList>
    </citation>
    <scope>NUCLEOTIDE SEQUENCE [LARGE SCALE GENOMIC DNA]</scope>
    <source>
        <strain>cv. Nipponbare</strain>
    </source>
</reference>
<sequence length="397" mass="44907">MTIRNQRFSLLKQPIYSTLNQHLIDYPTPSNLSYWWGFGSLAGICLVIQIVTGVFLAMHYTPHVDLAFNSVEHIMRDVEGGWLLRYMHANGASMFFIVVYLHIFRGLYYASYSSPREFVWCLGVVIFLLMIVTAFIGYVLPWGQMSFWGATVITSLASAIPVVGDTIVTWLWGGFSVDNATLNRFFSLHYLLPFILVGASLLHLAALHQYGSNNPLGVHSEMDKIAFYPYFYVKDLVGWVAFAIFFSIWIFFAPNVLGHPDNYIPANPMSTPPHIVPEWYFLPIYAILRSIPDKAGGVAAIALVFISLLALPFFKEMYVRSSSFRPIYQGIFWLLLADCLLLGWIGCQPVEAPFVTIGQISSFFFFLFFAITPILGRVGRGIPKYYTDETHRTGSVS</sequence>
<evidence type="ECO:0000250" key="1"/>
<evidence type="ECO:0000250" key="2">
    <source>
        <dbReference type="UniProtKB" id="P00157"/>
    </source>
</evidence>
<evidence type="ECO:0000250" key="3">
    <source>
        <dbReference type="UniProtKB" id="P00163"/>
    </source>
</evidence>
<evidence type="ECO:0000255" key="4">
    <source>
        <dbReference type="PROSITE-ProRule" id="PRU00967"/>
    </source>
</evidence>
<evidence type="ECO:0000255" key="5">
    <source>
        <dbReference type="PROSITE-ProRule" id="PRU00968"/>
    </source>
</evidence>
<evidence type="ECO:0000269" key="6">
    <source>
    </source>
</evidence>
<comment type="function">
    <text evidence="3">Component of the ubiquinol-cytochrome c reductase complex (complex III or cytochrome b-c1 complex) that is part of the mitochondrial respiratory chain. The b-c1 complex mediates electron transfer from ubiquinol to cytochrome c. Contributes to the generation of a proton gradient across the mitochondrial membrane that is then used for ATP synthesis.</text>
</comment>
<comment type="cofactor">
    <cofactor evidence="3">
        <name>heme b</name>
        <dbReference type="ChEBI" id="CHEBI:60344"/>
    </cofactor>
    <text evidence="3">Binds 2 heme b groups non-covalently.</text>
</comment>
<comment type="subunit">
    <text evidence="1">The main subunits of complex b-c1 are: cytochrome b, cytochrome c1 and the Rieske protein.</text>
</comment>
<comment type="subcellular location">
    <subcellularLocation>
        <location evidence="3">Mitochondrion inner membrane</location>
        <topology evidence="3">Multi-pass membrane protein</topology>
    </subcellularLocation>
</comment>
<comment type="RNA editing">
    <location>
        <position position="60" evidence="6"/>
    </location>
    <location>
        <position position="96" evidence="6"/>
    </location>
    <location>
        <position position="100" evidence="6"/>
    </location>
    <location>
        <position position="109" evidence="6"/>
    </location>
    <location>
        <position position="140" evidence="6"/>
    </location>
    <location>
        <position position="190" evidence="6"/>
    </location>
    <location>
        <position position="194" evidence="6"/>
    </location>
    <location>
        <position position="227" evidence="6"/>
    </location>
    <location>
        <position position="239" evidence="6"/>
    </location>
    <location>
        <position position="242" evidence="6"/>
    </location>
    <location>
        <position position="270" evidence="6"/>
    </location>
    <location>
        <position position="285" evidence="6"/>
    </location>
    <location>
        <position position="303" evidence="6"/>
    </location>
    <location>
        <position position="328" evidence="6"/>
    </location>
    <location>
        <position position="361" evidence="6"/>
    </location>
    <location>
        <position position="375" evidence="6"/>
    </location>
</comment>
<comment type="miscellaneous">
    <text evidence="1">Heme 1 (or BL or b562) is low-potential and absorbs at about 562 nm, and heme 2 (or BH or b566) is high-potential and absorbs at about 566 nm.</text>
</comment>
<comment type="similarity">
    <text evidence="4 5">Belongs to the cytochrome b family.</text>
</comment>
<comment type="caution">
    <text evidence="3">The protein contains only eight transmembrane helices, not nine as predicted by bioinformatics tools.</text>
</comment>
<protein>
    <recommendedName>
        <fullName>Cytochrome b</fullName>
    </recommendedName>
    <alternativeName>
        <fullName>Complex III subunit 3</fullName>
    </alternativeName>
    <alternativeName>
        <fullName>Complex III subunit III</fullName>
    </alternativeName>
    <alternativeName>
        <fullName>Cytochrome b-c1 complex subunit 3</fullName>
    </alternativeName>
    <alternativeName>
        <fullName>Ubiquinol-cytochrome-c reductase complex cytochrome b subunit</fullName>
    </alternativeName>
</protein>
<organism>
    <name type="scientific">Oryza sativa subsp. japonica</name>
    <name type="common">Rice</name>
    <dbReference type="NCBI Taxonomy" id="39947"/>
    <lineage>
        <taxon>Eukaryota</taxon>
        <taxon>Viridiplantae</taxon>
        <taxon>Streptophyta</taxon>
        <taxon>Embryophyta</taxon>
        <taxon>Tracheophyta</taxon>
        <taxon>Spermatophyta</taxon>
        <taxon>Magnoliopsida</taxon>
        <taxon>Liliopsida</taxon>
        <taxon>Poales</taxon>
        <taxon>Poaceae</taxon>
        <taxon>BOP clade</taxon>
        <taxon>Oryzoideae</taxon>
        <taxon>Oryzeae</taxon>
        <taxon>Oryzinae</taxon>
        <taxon>Oryza</taxon>
        <taxon>Oryza sativa</taxon>
    </lineage>
</organism>
<geneLocation type="mitochondrion"/>
<gene>
    <name type="primary">MT-CYB</name>
    <name type="synonym">COB</name>
    <name type="synonym">CYTB</name>
    <name type="synonym">MTCYB</name>
</gene>
<feature type="chain" id="PRO_0000290118" description="Cytochrome b">
    <location>
        <begin position="1"/>
        <end position="397"/>
    </location>
</feature>
<feature type="transmembrane region" description="Helical" evidence="3">
    <location>
        <begin position="38"/>
        <end position="58"/>
    </location>
</feature>
<feature type="transmembrane region" description="Helical" evidence="3">
    <location>
        <begin position="82"/>
        <end position="104"/>
    </location>
</feature>
<feature type="transmembrane region" description="Helical" evidence="3">
    <location>
        <begin position="119"/>
        <end position="139"/>
    </location>
</feature>
<feature type="transmembrane region" description="Helical" evidence="3">
    <location>
        <begin position="185"/>
        <end position="205"/>
    </location>
</feature>
<feature type="transmembrane region" description="Helical" evidence="3">
    <location>
        <begin position="231"/>
        <end position="251"/>
    </location>
</feature>
<feature type="transmembrane region" description="Helical" evidence="3">
    <location>
        <begin position="295"/>
        <end position="315"/>
    </location>
</feature>
<feature type="transmembrane region" description="Helical" evidence="3">
    <location>
        <begin position="327"/>
        <end position="347"/>
    </location>
</feature>
<feature type="transmembrane region" description="Helical" evidence="3">
    <location>
        <begin position="354"/>
        <end position="373"/>
    </location>
</feature>
<feature type="binding site" description="axial binding residue" evidence="3">
    <location>
        <position position="88"/>
    </location>
    <ligand>
        <name>heme b</name>
        <dbReference type="ChEBI" id="CHEBI:60344"/>
        <label>b562</label>
    </ligand>
    <ligandPart>
        <name>Fe</name>
        <dbReference type="ChEBI" id="CHEBI:18248"/>
    </ligandPart>
</feature>
<feature type="binding site" description="axial binding residue" evidence="3">
    <location>
        <position position="102"/>
    </location>
    <ligand>
        <name>heme b</name>
        <dbReference type="ChEBI" id="CHEBI:60344"/>
        <label>b566</label>
    </ligand>
    <ligandPart>
        <name>Fe</name>
        <dbReference type="ChEBI" id="CHEBI:18248"/>
    </ligandPart>
</feature>
<feature type="binding site" description="axial binding residue" evidence="3">
    <location>
        <position position="189"/>
    </location>
    <ligand>
        <name>heme b</name>
        <dbReference type="ChEBI" id="CHEBI:60344"/>
        <label>b562</label>
    </ligand>
    <ligandPart>
        <name>Fe</name>
        <dbReference type="ChEBI" id="CHEBI:18248"/>
    </ligandPart>
</feature>
<feature type="binding site" description="axial binding residue" evidence="3">
    <location>
        <position position="203"/>
    </location>
    <ligand>
        <name>heme b</name>
        <dbReference type="ChEBI" id="CHEBI:60344"/>
        <label>b566</label>
    </ligand>
    <ligandPart>
        <name>Fe</name>
        <dbReference type="ChEBI" id="CHEBI:18248"/>
    </ligandPart>
</feature>
<feature type="binding site" evidence="2">
    <location>
        <position position="208"/>
    </location>
    <ligand>
        <name>a ubiquinone</name>
        <dbReference type="ChEBI" id="CHEBI:16389"/>
    </ligand>
</feature>